<gene>
    <name evidence="1" type="primary">dnaG</name>
    <name type="ordered locus">MTH_891</name>
</gene>
<evidence type="ECO:0000255" key="1">
    <source>
        <dbReference type="HAMAP-Rule" id="MF_00007"/>
    </source>
</evidence>
<accession>O26977</accession>
<dbReference type="EC" id="2.7.7.101" evidence="1"/>
<dbReference type="EMBL" id="AE000666">
    <property type="protein sequence ID" value="AAB85389.1"/>
    <property type="molecule type" value="Genomic_DNA"/>
</dbReference>
<dbReference type="PIR" id="B69219">
    <property type="entry name" value="B69219"/>
</dbReference>
<dbReference type="RefSeq" id="WP_010876524.1">
    <property type="nucleotide sequence ID" value="NC_000916.1"/>
</dbReference>
<dbReference type="SMR" id="O26977"/>
<dbReference type="FunCoup" id="O26977">
    <property type="interactions" value="14"/>
</dbReference>
<dbReference type="IntAct" id="O26977">
    <property type="interactions" value="4"/>
</dbReference>
<dbReference type="STRING" id="187420.MTH_891"/>
<dbReference type="PaxDb" id="187420-MTH_891"/>
<dbReference type="EnsemblBacteria" id="AAB85389">
    <property type="protein sequence ID" value="AAB85389"/>
    <property type="gene ID" value="MTH_891"/>
</dbReference>
<dbReference type="GeneID" id="1471299"/>
<dbReference type="KEGG" id="mth:MTH_891"/>
<dbReference type="PATRIC" id="fig|187420.15.peg.876"/>
<dbReference type="HOGENOM" id="CLU_034626_0_0_2"/>
<dbReference type="InParanoid" id="O26977"/>
<dbReference type="Proteomes" id="UP000005223">
    <property type="component" value="Chromosome"/>
</dbReference>
<dbReference type="GO" id="GO:0005737">
    <property type="term" value="C:cytoplasm"/>
    <property type="evidence" value="ECO:0007669"/>
    <property type="project" value="TreeGrafter"/>
</dbReference>
<dbReference type="GO" id="GO:0000428">
    <property type="term" value="C:DNA-directed RNA polymerase complex"/>
    <property type="evidence" value="ECO:0007669"/>
    <property type="project" value="UniProtKB-KW"/>
</dbReference>
<dbReference type="GO" id="GO:0000178">
    <property type="term" value="C:exosome (RNase complex)"/>
    <property type="evidence" value="ECO:0007669"/>
    <property type="project" value="UniProtKB-KW"/>
</dbReference>
<dbReference type="GO" id="GO:1990077">
    <property type="term" value="C:primosome complex"/>
    <property type="evidence" value="ECO:0007669"/>
    <property type="project" value="UniProtKB-KW"/>
</dbReference>
<dbReference type="GO" id="GO:0003899">
    <property type="term" value="F:DNA-directed RNA polymerase activity"/>
    <property type="evidence" value="ECO:0007669"/>
    <property type="project" value="InterPro"/>
</dbReference>
<dbReference type="GO" id="GO:0046872">
    <property type="term" value="F:metal ion binding"/>
    <property type="evidence" value="ECO:0007669"/>
    <property type="project" value="UniProtKB-KW"/>
</dbReference>
<dbReference type="GO" id="GO:0008143">
    <property type="term" value="F:poly(A) binding"/>
    <property type="evidence" value="ECO:0007669"/>
    <property type="project" value="InterPro"/>
</dbReference>
<dbReference type="GO" id="GO:0006269">
    <property type="term" value="P:DNA replication, synthesis of primer"/>
    <property type="evidence" value="ECO:0007669"/>
    <property type="project" value="UniProtKB-UniRule"/>
</dbReference>
<dbReference type="CDD" id="cd01029">
    <property type="entry name" value="TOPRIM_primases"/>
    <property type="match status" value="1"/>
</dbReference>
<dbReference type="FunFam" id="3.40.1360.10:FF:000010">
    <property type="entry name" value="DNA primase DnaG"/>
    <property type="match status" value="1"/>
</dbReference>
<dbReference type="Gene3D" id="3.40.1360.10">
    <property type="match status" value="1"/>
</dbReference>
<dbReference type="HAMAP" id="MF_00007">
    <property type="entry name" value="DNA_primase_DnaG_arc"/>
    <property type="match status" value="1"/>
</dbReference>
<dbReference type="InterPro" id="IPR050219">
    <property type="entry name" value="DnaG_primase"/>
</dbReference>
<dbReference type="InterPro" id="IPR020607">
    <property type="entry name" value="Primase_DnaG_arc"/>
</dbReference>
<dbReference type="InterPro" id="IPR034154">
    <property type="entry name" value="TOPRIM_DnaG/twinkle"/>
</dbReference>
<dbReference type="InterPro" id="IPR006171">
    <property type="entry name" value="TOPRIM_dom"/>
</dbReference>
<dbReference type="NCBIfam" id="NF003108">
    <property type="entry name" value="PRK04031.1-1"/>
    <property type="match status" value="1"/>
</dbReference>
<dbReference type="PANTHER" id="PTHR30313">
    <property type="entry name" value="DNA PRIMASE"/>
    <property type="match status" value="1"/>
</dbReference>
<dbReference type="PANTHER" id="PTHR30313:SF2">
    <property type="entry name" value="DNA PRIMASE"/>
    <property type="match status" value="1"/>
</dbReference>
<dbReference type="Pfam" id="PF13662">
    <property type="entry name" value="Toprim_4"/>
    <property type="match status" value="1"/>
</dbReference>
<dbReference type="SMART" id="SM00493">
    <property type="entry name" value="TOPRIM"/>
    <property type="match status" value="1"/>
</dbReference>
<dbReference type="SUPFAM" id="SSF56731">
    <property type="entry name" value="DNA primase core"/>
    <property type="match status" value="1"/>
</dbReference>
<dbReference type="PROSITE" id="PS50880">
    <property type="entry name" value="TOPRIM"/>
    <property type="match status" value="1"/>
</dbReference>
<protein>
    <recommendedName>
        <fullName evidence="1">DNA primase DnaG</fullName>
        <ecNumber evidence="1">2.7.7.101</ecNumber>
    </recommendedName>
</protein>
<keyword id="KW-0235">DNA replication</keyword>
<keyword id="KW-0240">DNA-directed RNA polymerase</keyword>
<keyword id="KW-0271">Exosome</keyword>
<keyword id="KW-0460">Magnesium</keyword>
<keyword id="KW-0479">Metal-binding</keyword>
<keyword id="KW-0548">Nucleotidyltransferase</keyword>
<keyword id="KW-0639">Primosome</keyword>
<keyword id="KW-1185">Reference proteome</keyword>
<keyword id="KW-0804">Transcription</keyword>
<keyword id="KW-0808">Transferase</keyword>
<reference key="1">
    <citation type="journal article" date="1997" name="J. Bacteriol.">
        <title>Complete genome sequence of Methanobacterium thermoautotrophicum deltaH: functional analysis and comparative genomics.</title>
        <authorList>
            <person name="Smith D.R."/>
            <person name="Doucette-Stamm L.A."/>
            <person name="Deloughery C."/>
            <person name="Lee H.-M."/>
            <person name="Dubois J."/>
            <person name="Aldredge T."/>
            <person name="Bashirzadeh R."/>
            <person name="Blakely D."/>
            <person name="Cook R."/>
            <person name="Gilbert K."/>
            <person name="Harrison D."/>
            <person name="Hoang L."/>
            <person name="Keagle P."/>
            <person name="Lumm W."/>
            <person name="Pothier B."/>
            <person name="Qiu D."/>
            <person name="Spadafora R."/>
            <person name="Vicare R."/>
            <person name="Wang Y."/>
            <person name="Wierzbowski J."/>
            <person name="Gibson R."/>
            <person name="Jiwani N."/>
            <person name="Caruso A."/>
            <person name="Bush D."/>
            <person name="Safer H."/>
            <person name="Patwell D."/>
            <person name="Prabhakar S."/>
            <person name="McDougall S."/>
            <person name="Shimer G."/>
            <person name="Goyal A."/>
            <person name="Pietrovski S."/>
            <person name="Church G.M."/>
            <person name="Daniels C.J."/>
            <person name="Mao J.-I."/>
            <person name="Rice P."/>
            <person name="Noelling J."/>
            <person name="Reeve J.N."/>
        </authorList>
    </citation>
    <scope>NUCLEOTIDE SEQUENCE [LARGE SCALE GENOMIC DNA]</scope>
    <source>
        <strain>ATCC 29096 / DSM 1053 / JCM 10044 / NBRC 100330 / Delta H</strain>
    </source>
</reference>
<proteinExistence type="inferred from homology"/>
<comment type="function">
    <text evidence="1">RNA polymerase that catalyzes the synthesis of short RNA molecules used as primers for DNA polymerase during DNA replication. Also part of the exosome, which is a complex involved in RNA degradation. Acts as a poly(A)-binding protein that enhances the interaction between heteromeric, adenine-rich transcripts and the exosome.</text>
</comment>
<comment type="catalytic activity">
    <reaction evidence="1">
        <text>ssDNA + n NTP = ssDNA/pppN(pN)n-1 hybrid + (n-1) diphosphate.</text>
        <dbReference type="EC" id="2.7.7.101"/>
    </reaction>
</comment>
<comment type="cofactor">
    <cofactor evidence="1">
        <name>Mg(2+)</name>
        <dbReference type="ChEBI" id="CHEBI:18420"/>
    </cofactor>
    <text evidence="1">Binds two Mg(2+) per subunit.</text>
</comment>
<comment type="subunit">
    <text evidence="1">Forms a ternary complex with MCM helicase and DNA. Component of the archaeal exosome complex.</text>
</comment>
<comment type="similarity">
    <text evidence="1">Belongs to the archaeal DnaG primase family.</text>
</comment>
<name>DNAG_METTH</name>
<sequence>MGKEEISTTKYLIHAQINANGIVEKPDVVGAIFGQTEGLLSNDLDLREFQKTGRIGRIKVNITSRGGKSKGEIIIPSSLDRVETAILAASLETINRVGPCEAYIQVTKVEDVRAVKRKRVVERAKEIYASMMEEVTPESLKMIEEVKEAMRVHEITEYGEEKLPAGPNVETSDAILVVEGRSDVLNLLKYGIKNAIAVEGVSVPKTVADLTRKKTVTAFVDGDRGGELILKELLQVGEIDYVTRAPKGKEVEDLEKDEIMMALRNKVPVEQFYHDLGMKKEKKKTEDKMVLLRNILKELEGTGNAEILDDALNILREVKVENLYDELSRVNNHPYAVVFDGVITQRLVDLSFEKGLRYLVAVRSGDIVKKPHNLKLITGHT</sequence>
<organism>
    <name type="scientific">Methanothermobacter thermautotrophicus (strain ATCC 29096 / DSM 1053 / JCM 10044 / NBRC 100330 / Delta H)</name>
    <name type="common">Methanobacterium thermoautotrophicum</name>
    <dbReference type="NCBI Taxonomy" id="187420"/>
    <lineage>
        <taxon>Archaea</taxon>
        <taxon>Methanobacteriati</taxon>
        <taxon>Methanobacteriota</taxon>
        <taxon>Methanomada group</taxon>
        <taxon>Methanobacteria</taxon>
        <taxon>Methanobacteriales</taxon>
        <taxon>Methanobacteriaceae</taxon>
        <taxon>Methanothermobacter</taxon>
    </lineage>
</organism>
<feature type="chain" id="PRO_0000144126" description="DNA primase DnaG">
    <location>
        <begin position="1"/>
        <end position="381"/>
    </location>
</feature>
<feature type="domain" description="Toprim" evidence="1">
    <location>
        <begin position="173"/>
        <end position="259"/>
    </location>
</feature>
<feature type="binding site" evidence="1">
    <location>
        <position position="179"/>
    </location>
    <ligand>
        <name>Mg(2+)</name>
        <dbReference type="ChEBI" id="CHEBI:18420"/>
        <label>1</label>
        <note>catalytic</note>
    </ligand>
</feature>
<feature type="binding site" evidence="1">
    <location>
        <position position="221"/>
    </location>
    <ligand>
        <name>Mg(2+)</name>
        <dbReference type="ChEBI" id="CHEBI:18420"/>
        <label>1</label>
        <note>catalytic</note>
    </ligand>
</feature>
<feature type="binding site" evidence="1">
    <location>
        <position position="221"/>
    </location>
    <ligand>
        <name>Mg(2+)</name>
        <dbReference type="ChEBI" id="CHEBI:18420"/>
        <label>2</label>
    </ligand>
</feature>
<feature type="binding site" evidence="1">
    <location>
        <position position="223"/>
    </location>
    <ligand>
        <name>Mg(2+)</name>
        <dbReference type="ChEBI" id="CHEBI:18420"/>
        <label>2</label>
    </ligand>
</feature>